<reference key="1">
    <citation type="journal article" date="1995" name="Mol. Gen. Genet.">
        <title>Structure, organization and expression of the metallothionein gene family in Arabidopsis.</title>
        <authorList>
            <person name="Zhou J."/>
            <person name="Goldsbrough P.B."/>
        </authorList>
    </citation>
    <scope>NUCLEOTIDE SEQUENCE [GENOMIC DNA]</scope>
    <source>
        <strain>cv. Columbia</strain>
    </source>
</reference>
<reference key="2">
    <citation type="journal article" date="2000" name="Nature">
        <title>Sequence and analysis of chromosome 1 of the plant Arabidopsis thaliana.</title>
        <authorList>
            <person name="Theologis A."/>
            <person name="Ecker J.R."/>
            <person name="Palm C.J."/>
            <person name="Federspiel N.A."/>
            <person name="Kaul S."/>
            <person name="White O."/>
            <person name="Alonso J."/>
            <person name="Altafi H."/>
            <person name="Araujo R."/>
            <person name="Bowman C.L."/>
            <person name="Brooks S.Y."/>
            <person name="Buehler E."/>
            <person name="Chan A."/>
            <person name="Chao Q."/>
            <person name="Chen H."/>
            <person name="Cheuk R.F."/>
            <person name="Chin C.W."/>
            <person name="Chung M.K."/>
            <person name="Conn L."/>
            <person name="Conway A.B."/>
            <person name="Conway A.R."/>
            <person name="Creasy T.H."/>
            <person name="Dewar K."/>
            <person name="Dunn P."/>
            <person name="Etgu P."/>
            <person name="Feldblyum T.V."/>
            <person name="Feng J.-D."/>
            <person name="Fong B."/>
            <person name="Fujii C.Y."/>
            <person name="Gill J.E."/>
            <person name="Goldsmith A.D."/>
            <person name="Haas B."/>
            <person name="Hansen N.F."/>
            <person name="Hughes B."/>
            <person name="Huizar L."/>
            <person name="Hunter J.L."/>
            <person name="Jenkins J."/>
            <person name="Johnson-Hopson C."/>
            <person name="Khan S."/>
            <person name="Khaykin E."/>
            <person name="Kim C.J."/>
            <person name="Koo H.L."/>
            <person name="Kremenetskaia I."/>
            <person name="Kurtz D.B."/>
            <person name="Kwan A."/>
            <person name="Lam B."/>
            <person name="Langin-Hooper S."/>
            <person name="Lee A."/>
            <person name="Lee J.M."/>
            <person name="Lenz C.A."/>
            <person name="Li J.H."/>
            <person name="Li Y.-P."/>
            <person name="Lin X."/>
            <person name="Liu S.X."/>
            <person name="Liu Z.A."/>
            <person name="Luros J.S."/>
            <person name="Maiti R."/>
            <person name="Marziali A."/>
            <person name="Militscher J."/>
            <person name="Miranda M."/>
            <person name="Nguyen M."/>
            <person name="Nierman W.C."/>
            <person name="Osborne B.I."/>
            <person name="Pai G."/>
            <person name="Peterson J."/>
            <person name="Pham P.K."/>
            <person name="Rizzo M."/>
            <person name="Rooney T."/>
            <person name="Rowley D."/>
            <person name="Sakano H."/>
            <person name="Salzberg S.L."/>
            <person name="Schwartz J.R."/>
            <person name="Shinn P."/>
            <person name="Southwick A.M."/>
            <person name="Sun H."/>
            <person name="Tallon L.J."/>
            <person name="Tambunga G."/>
            <person name="Toriumi M.J."/>
            <person name="Town C.D."/>
            <person name="Utterback T."/>
            <person name="Van Aken S."/>
            <person name="Vaysberg M."/>
            <person name="Vysotskaia V.S."/>
            <person name="Walker M."/>
            <person name="Wu D."/>
            <person name="Yu G."/>
            <person name="Fraser C.M."/>
            <person name="Venter J.C."/>
            <person name="Davis R.W."/>
        </authorList>
    </citation>
    <scope>NUCLEOTIDE SEQUENCE [LARGE SCALE GENOMIC DNA]</scope>
    <source>
        <strain>cv. Columbia</strain>
    </source>
</reference>
<reference key="3">
    <citation type="journal article" date="2017" name="Plant J.">
        <title>Araport11: a complete reannotation of the Arabidopsis thaliana reference genome.</title>
        <authorList>
            <person name="Cheng C.Y."/>
            <person name="Krishnakumar V."/>
            <person name="Chan A.P."/>
            <person name="Thibaud-Nissen F."/>
            <person name="Schobel S."/>
            <person name="Town C.D."/>
        </authorList>
    </citation>
    <scope>GENOME REANNOTATION</scope>
    <source>
        <strain>cv. Columbia</strain>
    </source>
</reference>
<reference key="4">
    <citation type="journal article" date="2003" name="Science">
        <title>Empirical analysis of transcriptional activity in the Arabidopsis genome.</title>
        <authorList>
            <person name="Yamada K."/>
            <person name="Lim J."/>
            <person name="Dale J.M."/>
            <person name="Chen H."/>
            <person name="Shinn P."/>
            <person name="Palm C.J."/>
            <person name="Southwick A.M."/>
            <person name="Wu H.C."/>
            <person name="Kim C.J."/>
            <person name="Nguyen M."/>
            <person name="Pham P.K."/>
            <person name="Cheuk R.F."/>
            <person name="Karlin-Newmann G."/>
            <person name="Liu S.X."/>
            <person name="Lam B."/>
            <person name="Sakano H."/>
            <person name="Wu T."/>
            <person name="Yu G."/>
            <person name="Miranda M."/>
            <person name="Quach H.L."/>
            <person name="Tripp M."/>
            <person name="Chang C.H."/>
            <person name="Lee J.M."/>
            <person name="Toriumi M.J."/>
            <person name="Chan M.M."/>
            <person name="Tang C.C."/>
            <person name="Onodera C.S."/>
            <person name="Deng J.M."/>
            <person name="Akiyama K."/>
            <person name="Ansari Y."/>
            <person name="Arakawa T."/>
            <person name="Banh J."/>
            <person name="Banno F."/>
            <person name="Bowser L."/>
            <person name="Brooks S.Y."/>
            <person name="Carninci P."/>
            <person name="Chao Q."/>
            <person name="Choy N."/>
            <person name="Enju A."/>
            <person name="Goldsmith A.D."/>
            <person name="Gurjal M."/>
            <person name="Hansen N.F."/>
            <person name="Hayashizaki Y."/>
            <person name="Johnson-Hopson C."/>
            <person name="Hsuan V.W."/>
            <person name="Iida K."/>
            <person name="Karnes M."/>
            <person name="Khan S."/>
            <person name="Koesema E."/>
            <person name="Ishida J."/>
            <person name="Jiang P.X."/>
            <person name="Jones T."/>
            <person name="Kawai J."/>
            <person name="Kamiya A."/>
            <person name="Meyers C."/>
            <person name="Nakajima M."/>
            <person name="Narusaka M."/>
            <person name="Seki M."/>
            <person name="Sakurai T."/>
            <person name="Satou M."/>
            <person name="Tamse R."/>
            <person name="Vaysberg M."/>
            <person name="Wallender E.K."/>
            <person name="Wong C."/>
            <person name="Yamamura Y."/>
            <person name="Yuan S."/>
            <person name="Shinozaki K."/>
            <person name="Davis R.W."/>
            <person name="Theologis A."/>
            <person name="Ecker J.R."/>
        </authorList>
    </citation>
    <scope>NUCLEOTIDE SEQUENCE [LARGE SCALE MRNA]</scope>
    <source>
        <strain>cv. Columbia</strain>
    </source>
</reference>
<reference key="5">
    <citation type="submission" date="2002-03" db="EMBL/GenBank/DDBJ databases">
        <title>Full-length cDNA from Arabidopsis thaliana.</title>
        <authorList>
            <person name="Brover V.V."/>
            <person name="Troukhan M.E."/>
            <person name="Alexandrov N.A."/>
            <person name="Lu Y.-P."/>
            <person name="Flavell R.B."/>
            <person name="Feldmann K.A."/>
        </authorList>
    </citation>
    <scope>NUCLEOTIDE SEQUENCE [LARGE SCALE MRNA]</scope>
</reference>
<reference key="6">
    <citation type="journal article" date="2005" name="Plant Mol. Biol.">
        <title>The plant MT1 metallothioneins are stabilized by binding cadmiums and are required for cadmium tolerance and accumulation.</title>
        <authorList>
            <person name="Zimeri A.M."/>
            <person name="Dhankher O.P."/>
            <person name="McCaig B."/>
            <person name="Meagher R.B."/>
        </authorList>
    </citation>
    <scope>FUNCTION</scope>
</reference>
<reference key="7">
    <citation type="journal article" date="2012" name="Plant Cell Environ.">
        <title>Type 4 metallothionein genes are involved in regulating Zn ion accumulation in late embryo and in controlling early seedling growth in Arabidopsis.</title>
        <authorList>
            <person name="Ren Y."/>
            <person name="Liu Y."/>
            <person name="Chen H."/>
            <person name="Li G."/>
            <person name="Zhang X."/>
            <person name="Zhao J."/>
        </authorList>
    </citation>
    <scope>TISSUE SPECIFICITY</scope>
</reference>
<keyword id="KW-0479">Metal-binding</keyword>
<keyword id="KW-0480">Metal-thiolate cluster</keyword>
<keyword id="KW-1185">Reference proteome</keyword>
<name>MT1C_ARATH</name>
<comment type="function">
    <text evidence="1 3">Metallothioneins have a high content of cysteine residues that bind various heavy metals (Probable). Confers tolerance to cadmium (Cd) and plays a role in Cd and zinc (Zn) homeostasis (PubMed:16240177).</text>
</comment>
<comment type="tissue specificity">
    <text evidence="2">Widely expressed at low levels.</text>
</comment>
<comment type="similarity">
    <text evidence="3">Belongs to the metallothionein superfamily. Type 15 family.</text>
</comment>
<dbReference type="EMBL" id="U11255">
    <property type="protein sequence ID" value="AAA82211.1"/>
    <property type="molecule type" value="Genomic_DNA"/>
</dbReference>
<dbReference type="EMBL" id="AC007583">
    <property type="protein sequence ID" value="AAF75097.1"/>
    <property type="molecule type" value="Genomic_DNA"/>
</dbReference>
<dbReference type="EMBL" id="CP002684">
    <property type="protein sequence ID" value="AEE28148.1"/>
    <property type="molecule type" value="Genomic_DNA"/>
</dbReference>
<dbReference type="EMBL" id="AF375400">
    <property type="protein sequence ID" value="AAK52984.1"/>
    <property type="molecule type" value="mRNA"/>
</dbReference>
<dbReference type="EMBL" id="AY142056">
    <property type="protein sequence ID" value="AAM98320.1"/>
    <property type="molecule type" value="mRNA"/>
</dbReference>
<dbReference type="EMBL" id="AY085074">
    <property type="protein sequence ID" value="AAM61630.1"/>
    <property type="molecule type" value="mRNA"/>
</dbReference>
<dbReference type="PIR" id="S57860">
    <property type="entry name" value="S57860"/>
</dbReference>
<dbReference type="RefSeq" id="NP_172240.1">
    <property type="nucleotide sequence ID" value="NM_100634.2"/>
</dbReference>
<dbReference type="STRING" id="3702.Q38804"/>
<dbReference type="EnsemblPlants" id="AT1G07610.1">
    <property type="protein sequence ID" value="AT1G07610.1"/>
    <property type="gene ID" value="AT1G07610"/>
</dbReference>
<dbReference type="GeneID" id="837274"/>
<dbReference type="Gramene" id="AT1G07610.1">
    <property type="protein sequence ID" value="AT1G07610.1"/>
    <property type="gene ID" value="AT1G07610"/>
</dbReference>
<dbReference type="KEGG" id="ath:AT1G07610"/>
<dbReference type="Araport" id="AT1G07610"/>
<dbReference type="TAIR" id="AT1G07610">
    <property type="gene designation" value="MT1C"/>
</dbReference>
<dbReference type="eggNOG" id="KOG4738">
    <property type="taxonomic scope" value="Eukaryota"/>
</dbReference>
<dbReference type="HOGENOM" id="CLU_3208289_0_0_1"/>
<dbReference type="InParanoid" id="Q38804"/>
<dbReference type="PRO" id="PR:Q38804"/>
<dbReference type="Proteomes" id="UP000006548">
    <property type="component" value="Chromosome 1"/>
</dbReference>
<dbReference type="ExpressionAtlas" id="Q38804">
    <property type="expression patterns" value="baseline and differential"/>
</dbReference>
<dbReference type="GO" id="GO:0022626">
    <property type="term" value="C:cytosolic ribosome"/>
    <property type="evidence" value="ECO:0007005"/>
    <property type="project" value="TAIR"/>
</dbReference>
<dbReference type="GO" id="GO:0005507">
    <property type="term" value="F:copper ion binding"/>
    <property type="evidence" value="ECO:0000250"/>
    <property type="project" value="TAIR"/>
</dbReference>
<dbReference type="GO" id="GO:0046688">
    <property type="term" value="P:response to copper ion"/>
    <property type="evidence" value="ECO:0000250"/>
    <property type="project" value="TAIR"/>
</dbReference>
<protein>
    <recommendedName>
        <fullName>Metallothionein-like protein 1C</fullName>
        <shortName>MT-1C</shortName>
    </recommendedName>
</protein>
<feature type="chain" id="PRO_0000197421" description="Metallothionein-like protein 1C">
    <location>
        <begin position="1"/>
        <end position="45"/>
    </location>
</feature>
<gene>
    <name type="primary">MT1C</name>
    <name type="ordered locus">At1g07610</name>
    <name type="ORF">F22G5_34</name>
    <name type="ORF">F24B9.33</name>
</gene>
<proteinExistence type="evidence at transcript level"/>
<evidence type="ECO:0000269" key="1">
    <source>
    </source>
</evidence>
<evidence type="ECO:0000269" key="2">
    <source>
    </source>
</evidence>
<evidence type="ECO:0000305" key="3"/>
<sequence length="45" mass="4495">MAGSNCGCGSSCKCGDSCSCEKNYNKECDNCSCGSNCSCGSSCNC</sequence>
<organism>
    <name type="scientific">Arabidopsis thaliana</name>
    <name type="common">Mouse-ear cress</name>
    <dbReference type="NCBI Taxonomy" id="3702"/>
    <lineage>
        <taxon>Eukaryota</taxon>
        <taxon>Viridiplantae</taxon>
        <taxon>Streptophyta</taxon>
        <taxon>Embryophyta</taxon>
        <taxon>Tracheophyta</taxon>
        <taxon>Spermatophyta</taxon>
        <taxon>Magnoliopsida</taxon>
        <taxon>eudicotyledons</taxon>
        <taxon>Gunneridae</taxon>
        <taxon>Pentapetalae</taxon>
        <taxon>rosids</taxon>
        <taxon>malvids</taxon>
        <taxon>Brassicales</taxon>
        <taxon>Brassicaceae</taxon>
        <taxon>Camelineae</taxon>
        <taxon>Arabidopsis</taxon>
    </lineage>
</organism>
<accession>Q38804</accession>